<feature type="chain" id="PRO_0000438984" description="Non-reducing polyketide synthase PKS19">
    <location>
        <begin position="1"/>
        <end position="1763"/>
    </location>
</feature>
<feature type="domain" description="Ketosynthase family 3 (KS3)" evidence="4 10">
    <location>
        <begin position="390"/>
        <end position="822"/>
    </location>
</feature>
<feature type="domain" description="PKS/mFAS DH" evidence="5">
    <location>
        <begin position="1307"/>
        <end position="1609"/>
    </location>
</feature>
<feature type="domain" description="Carrier" evidence="3 10">
    <location>
        <begin position="1689"/>
        <end position="1763"/>
    </location>
</feature>
<feature type="region of interest" description="N-terminal acylcarrier protein transacylase domain (SAT)" evidence="2 10">
    <location>
        <begin position="20"/>
        <end position="261"/>
    </location>
</feature>
<feature type="region of interest" description="Malonyl-CoA:ACP transacylase (MAT) domain" evidence="2 10">
    <location>
        <begin position="922"/>
        <end position="1227"/>
    </location>
</feature>
<feature type="region of interest" description="N-terminal hotdog fold" evidence="5">
    <location>
        <begin position="1307"/>
        <end position="1439"/>
    </location>
</feature>
<feature type="region of interest" description="Product template (PT) domain" evidence="2 10">
    <location>
        <begin position="1334"/>
        <end position="1588"/>
    </location>
</feature>
<feature type="region of interest" description="C-terminal hotdog fold" evidence="5">
    <location>
        <begin position="1461"/>
        <end position="1609"/>
    </location>
</feature>
<feature type="region of interest" description="Disordered" evidence="6">
    <location>
        <begin position="1619"/>
        <end position="1690"/>
    </location>
</feature>
<feature type="compositionally biased region" description="Basic residues" evidence="6">
    <location>
        <begin position="1635"/>
        <end position="1647"/>
    </location>
</feature>
<feature type="active site" description="For beta-ketoacyl synthase activity" evidence="4">
    <location>
        <position position="561"/>
    </location>
</feature>
<feature type="active site" description="For beta-ketoacyl synthase activity" evidence="4">
    <location>
        <position position="696"/>
    </location>
</feature>
<feature type="active site" description="For beta-ketoacyl synthase activity" evidence="4">
    <location>
        <position position="740"/>
    </location>
</feature>
<feature type="active site" description="Proton acceptor; for dehydratase activity" evidence="5">
    <location>
        <position position="1339"/>
    </location>
</feature>
<feature type="active site" description="Proton donor; for dehydratase activity" evidence="5">
    <location>
        <position position="1522"/>
    </location>
</feature>
<feature type="modified residue" description="O-(pantetheine 4'-phosphoryl)serine" evidence="3">
    <location>
        <position position="1726"/>
    </location>
</feature>
<comment type="function">
    <text evidence="7">Non-reducing polyketide synthase that mediates the biosynthesis of alternariol (AOH), a micotoxin that seems not to be involved in virulence and oxidative stress tolerance (PubMed:26025896). PKS19 alone is sufficient for AOH synthesis which is initiated by priming with acetyl-CoA, followed by sequential condensations of 6 malonyl-CoA units (PubMed:26025896).</text>
</comment>
<comment type="domain">
    <text evidence="1">Multidomain protein; including a starter unit:ACP transacylase (SAT) that selects the starter unit; a ketosynthase (KS) that catalyzes repeated decarboxylative condensation to elongate the polyketide backbone; a malonyl-CoA:ACP transacylase (MAT) that selects and transfers the extender unit malonyl-CoA; a product template (PT) domain that controls the immediate cyclization regioselectivity of the reactive polyketide backbone; and an acyl-carrier protein (ACP) that serves as the tether of the growing and completed polyketide via its phosphopantetheinyl arm (By similarity).</text>
</comment>
<comment type="disruption phenotype">
    <text evidence="7">Impairs the production of alternariol (PubMed:26025896).</text>
</comment>
<comment type="sequence caution" evidence="9">
    <conflict type="erroneous gene model prediction">
        <sequence resource="EMBL-CDS" id="EAT76667"/>
    </conflict>
</comment>
<protein>
    <recommendedName>
        <fullName evidence="8">Non-reducing polyketide synthase PKS19</fullName>
        <shortName evidence="8">NR-PKS PKS19</shortName>
        <ecNumber evidence="10">2.3.1.-</ecNumber>
    </recommendedName>
    <alternativeName>
        <fullName evidence="8">Alternariol synthase</fullName>
        <shortName evidence="8">AOH synthase</shortName>
    </alternativeName>
</protein>
<reference key="1">
    <citation type="journal article" date="2015" name="Appl. Environ. Microbiol.">
        <title>SnPKS19 encodes the polyketide synthase for alternariol mycotoxin biosynthesis in the wheat pathogen Parastagonospora nodorum.</title>
        <authorList>
            <person name="Chooi Y.H."/>
            <person name="Muria-Gonzalez M.J."/>
            <person name="Mead O.L."/>
            <person name="Solomon P.S."/>
        </authorList>
    </citation>
    <scope>NUCLEOTIDE SEQUENCE [GENOMIC DNA / MRNA]</scope>
    <scope>DOMAIN</scope>
    <scope>FUNCTION</scope>
    <scope>DISRUPTION PHENOTYPE</scope>
    <source>
        <strain>SN15 / ATCC MYA-4574 / FGSC 10173</strain>
    </source>
</reference>
<reference key="2">
    <citation type="journal article" date="2007" name="Plant Cell">
        <title>Dothideomycete-plant interactions illuminated by genome sequencing and EST analysis of the wheat pathogen Stagonospora nodorum.</title>
        <authorList>
            <person name="Hane J.K."/>
            <person name="Lowe R.G.T."/>
            <person name="Solomon P.S."/>
            <person name="Tan K.-C."/>
            <person name="Schoch C.L."/>
            <person name="Spatafora J.W."/>
            <person name="Crous P.W."/>
            <person name="Kodira C.D."/>
            <person name="Birren B.W."/>
            <person name="Galagan J.E."/>
            <person name="Torriani S.F.F."/>
            <person name="McDonald B.A."/>
            <person name="Oliver R.P."/>
        </authorList>
    </citation>
    <scope>NUCLEOTIDE SEQUENCE [LARGE SCALE GENOMIC DNA]</scope>
    <source>
        <strain>SN15 / ATCC MYA-4574 / FGSC 10173</strain>
    </source>
</reference>
<dbReference type="EC" id="2.3.1.-" evidence="10"/>
<dbReference type="EMBL" id="KP941080">
    <property type="protein sequence ID" value="AKN45693.1"/>
    <property type="molecule type" value="mRNA"/>
</dbReference>
<dbReference type="EMBL" id="BK009264">
    <property type="protein sequence ID" value="DAA64872.1"/>
    <property type="molecule type" value="Genomic_DNA"/>
</dbReference>
<dbReference type="EMBL" id="CH445365">
    <property type="protein sequence ID" value="EAT76667.2"/>
    <property type="status" value="ALT_SEQ"/>
    <property type="molecule type" value="Genomic_DNA"/>
</dbReference>
<dbReference type="RefSeq" id="XP_001805964.1">
    <property type="nucleotide sequence ID" value="XM_001805912.1"/>
</dbReference>
<dbReference type="SMR" id="A0A0H4ADX3"/>
<dbReference type="STRING" id="321614.A0A0H4ADX3"/>
<dbReference type="GeneID" id="5982894"/>
<dbReference type="KEGG" id="pno:SNOG_15829"/>
<dbReference type="VEuPathDB" id="FungiDB:JI435_158290"/>
<dbReference type="eggNOG" id="KOG1202">
    <property type="taxonomic scope" value="Eukaryota"/>
</dbReference>
<dbReference type="InParanoid" id="A0A0H4ADX3"/>
<dbReference type="OrthoDB" id="329835at2759"/>
<dbReference type="PHI-base" id="PHI:4776"/>
<dbReference type="Proteomes" id="UP000001055">
    <property type="component" value="Unassembled WGS sequence"/>
</dbReference>
<dbReference type="GO" id="GO:0004315">
    <property type="term" value="F:3-oxoacyl-[acyl-carrier-protein] synthase activity"/>
    <property type="evidence" value="ECO:0007669"/>
    <property type="project" value="InterPro"/>
</dbReference>
<dbReference type="GO" id="GO:0004312">
    <property type="term" value="F:fatty acid synthase activity"/>
    <property type="evidence" value="ECO:0000318"/>
    <property type="project" value="GO_Central"/>
</dbReference>
<dbReference type="GO" id="GO:0006633">
    <property type="term" value="P:fatty acid biosynthetic process"/>
    <property type="evidence" value="ECO:0000318"/>
    <property type="project" value="GO_Central"/>
</dbReference>
<dbReference type="GO" id="GO:0044550">
    <property type="term" value="P:secondary metabolite biosynthetic process"/>
    <property type="evidence" value="ECO:0000318"/>
    <property type="project" value="GO_Central"/>
</dbReference>
<dbReference type="CDD" id="cd00833">
    <property type="entry name" value="PKS"/>
    <property type="match status" value="1"/>
</dbReference>
<dbReference type="Gene3D" id="3.30.70.3290">
    <property type="match status" value="1"/>
</dbReference>
<dbReference type="Gene3D" id="3.40.47.10">
    <property type="match status" value="1"/>
</dbReference>
<dbReference type="Gene3D" id="1.10.1200.10">
    <property type="entry name" value="ACP-like"/>
    <property type="match status" value="1"/>
</dbReference>
<dbReference type="Gene3D" id="3.40.366.10">
    <property type="entry name" value="Malonyl-Coenzyme A Acyl Carrier Protein, domain 2"/>
    <property type="match status" value="2"/>
</dbReference>
<dbReference type="Gene3D" id="3.10.129.110">
    <property type="entry name" value="Polyketide synthase dehydratase"/>
    <property type="match status" value="1"/>
</dbReference>
<dbReference type="InterPro" id="IPR001227">
    <property type="entry name" value="Ac_transferase_dom_sf"/>
</dbReference>
<dbReference type="InterPro" id="IPR036736">
    <property type="entry name" value="ACP-like_sf"/>
</dbReference>
<dbReference type="InterPro" id="IPR014043">
    <property type="entry name" value="Acyl_transferase_dom"/>
</dbReference>
<dbReference type="InterPro" id="IPR016035">
    <property type="entry name" value="Acyl_Trfase/lysoPLipase"/>
</dbReference>
<dbReference type="InterPro" id="IPR018201">
    <property type="entry name" value="Ketoacyl_synth_AS"/>
</dbReference>
<dbReference type="InterPro" id="IPR014031">
    <property type="entry name" value="Ketoacyl_synth_C"/>
</dbReference>
<dbReference type="InterPro" id="IPR014030">
    <property type="entry name" value="Ketoacyl_synth_N"/>
</dbReference>
<dbReference type="InterPro" id="IPR016036">
    <property type="entry name" value="Malonyl_transacylase_ACP-bd"/>
</dbReference>
<dbReference type="InterPro" id="IPR020841">
    <property type="entry name" value="PKS_Beta-ketoAc_synthase_dom"/>
</dbReference>
<dbReference type="InterPro" id="IPR042104">
    <property type="entry name" value="PKS_dehydratase_sf"/>
</dbReference>
<dbReference type="InterPro" id="IPR049551">
    <property type="entry name" value="PKS_DH_C"/>
</dbReference>
<dbReference type="InterPro" id="IPR049900">
    <property type="entry name" value="PKS_mFAS_DH"/>
</dbReference>
<dbReference type="InterPro" id="IPR050091">
    <property type="entry name" value="PKS_NRPS_Biosynth_Enz"/>
</dbReference>
<dbReference type="InterPro" id="IPR009081">
    <property type="entry name" value="PP-bd_ACP"/>
</dbReference>
<dbReference type="InterPro" id="IPR030918">
    <property type="entry name" value="PT_fungal_PKS"/>
</dbReference>
<dbReference type="InterPro" id="IPR032088">
    <property type="entry name" value="SAT"/>
</dbReference>
<dbReference type="InterPro" id="IPR016039">
    <property type="entry name" value="Thiolase-like"/>
</dbReference>
<dbReference type="NCBIfam" id="TIGR04532">
    <property type="entry name" value="PT_fungal_PKS"/>
    <property type="match status" value="1"/>
</dbReference>
<dbReference type="PANTHER" id="PTHR43775">
    <property type="entry name" value="FATTY ACID SYNTHASE"/>
    <property type="match status" value="1"/>
</dbReference>
<dbReference type="PANTHER" id="PTHR43775:SF37">
    <property type="entry name" value="SI:DKEY-61P9.11"/>
    <property type="match status" value="1"/>
</dbReference>
<dbReference type="Pfam" id="PF00698">
    <property type="entry name" value="Acyl_transf_1"/>
    <property type="match status" value="1"/>
</dbReference>
<dbReference type="Pfam" id="PF22621">
    <property type="entry name" value="CurL-like_PKS_C"/>
    <property type="match status" value="1"/>
</dbReference>
<dbReference type="Pfam" id="PF00109">
    <property type="entry name" value="ketoacyl-synt"/>
    <property type="match status" value="1"/>
</dbReference>
<dbReference type="Pfam" id="PF02801">
    <property type="entry name" value="Ketoacyl-synt_C"/>
    <property type="match status" value="1"/>
</dbReference>
<dbReference type="Pfam" id="PF00550">
    <property type="entry name" value="PP-binding"/>
    <property type="match status" value="1"/>
</dbReference>
<dbReference type="Pfam" id="PF14765">
    <property type="entry name" value="PS-DH"/>
    <property type="match status" value="1"/>
</dbReference>
<dbReference type="Pfam" id="PF16073">
    <property type="entry name" value="SAT"/>
    <property type="match status" value="1"/>
</dbReference>
<dbReference type="SMART" id="SM00827">
    <property type="entry name" value="PKS_AT"/>
    <property type="match status" value="1"/>
</dbReference>
<dbReference type="SMART" id="SM00825">
    <property type="entry name" value="PKS_KS"/>
    <property type="match status" value="1"/>
</dbReference>
<dbReference type="SUPFAM" id="SSF47336">
    <property type="entry name" value="ACP-like"/>
    <property type="match status" value="1"/>
</dbReference>
<dbReference type="SUPFAM" id="SSF52151">
    <property type="entry name" value="FabD/lysophospholipase-like"/>
    <property type="match status" value="1"/>
</dbReference>
<dbReference type="SUPFAM" id="SSF55048">
    <property type="entry name" value="Probable ACP-binding domain of malonyl-CoA ACP transacylase"/>
    <property type="match status" value="1"/>
</dbReference>
<dbReference type="SUPFAM" id="SSF53901">
    <property type="entry name" value="Thiolase-like"/>
    <property type="match status" value="1"/>
</dbReference>
<dbReference type="PROSITE" id="PS50075">
    <property type="entry name" value="CARRIER"/>
    <property type="match status" value="1"/>
</dbReference>
<dbReference type="PROSITE" id="PS00606">
    <property type="entry name" value="KS3_1"/>
    <property type="match status" value="1"/>
</dbReference>
<dbReference type="PROSITE" id="PS52004">
    <property type="entry name" value="KS3_2"/>
    <property type="match status" value="1"/>
</dbReference>
<dbReference type="PROSITE" id="PS52019">
    <property type="entry name" value="PKS_MFAS_DH"/>
    <property type="match status" value="1"/>
</dbReference>
<organism>
    <name type="scientific">Phaeosphaeria nodorum (strain SN15 / ATCC MYA-4574 / FGSC 10173)</name>
    <name type="common">Glume blotch fungus</name>
    <name type="synonym">Parastagonospora nodorum</name>
    <dbReference type="NCBI Taxonomy" id="321614"/>
    <lineage>
        <taxon>Eukaryota</taxon>
        <taxon>Fungi</taxon>
        <taxon>Dikarya</taxon>
        <taxon>Ascomycota</taxon>
        <taxon>Pezizomycotina</taxon>
        <taxon>Dothideomycetes</taxon>
        <taxon>Pleosporomycetidae</taxon>
        <taxon>Pleosporales</taxon>
        <taxon>Pleosporineae</taxon>
        <taxon>Phaeosphaeriaceae</taxon>
        <taxon>Parastagonospora</taxon>
    </lineage>
</organism>
<name>PKS19_PHANO</name>
<accession>A0A0H4ADX3</accession>
<accession>Q0TX07</accession>
<sequence>MTRAKVIYFSGEIPQGDPEGDQRNLFRKLHLLSKERDYPILASFLETVTWAMKEEHRRLVRAQRDLLPTFESILDLTDHVVELRKTSLGGAIERVLVLAFQLGSFIAYHEAHPLEYNFQASDTFLIARGPGMLSAAAVALCPSLPMISSISADITRVAFRFGLVVDQVCRSLEVSPDEINSAGAWIYCVYGVDPQKAHEAVTRFNAEKAYAETSMASVFNDDGKSVSIGGPPSTLKTLFTECDFFKRTKNVPMKKVQGMWHTGKVYGTEHVHQIIPKIHQKHQLYLPLFSPVKGQPLEAASATDLLEQIMEEMLTQRIRWDRTIQNVTERLKQASPESTQLIAIQPSQYVESLIGQWRADMPTTTHTTEDMMSAVMDLPLGNSRAKDAKSSKIAVVGMACRFPGGADNAEKFWELLAQGRDVHSPIPSDRFNIETHVDPAGKVPNTSKTPYGCFVDNPGLFDAMFFGMSPREAEQTDPMQRLALVTAYEALEHSGYVHGRGIHARRVGTFYGQASDDYREVNSGQDVGTYFIPGGCRAFGPGRINYFFKFWGPSFSVDTACSSSLAAIQAACTSLWSGDVDMAITGGMNIITNSDVYAGLSNGHFLSPTGGCKTWDEGADGYCRADGVGSVVLKRLEDAEADNDNILGVVLAAATDHSAEAVSITHPHDVAQAHLYNQVARRAGIDPLAVGYVEMHGTGTQAGDSNEMKSVTNVFAPSTGHIRDRDSPLHIGTVKSNMGHGEAAAGIMAFVKTMLVFQKGIIPPHIGIKTRFNPALPEDLAKRNVVIPVTAAIWVRNSDRKRLAMVNNFGAAGGNTSIIIEEAAPRPRTSEDVRKAQVITVSAKTANSLQENLKALVDYIEARSELSVADLAYTLSARRNHYNYRVSVLATSTAEAASLLRPHIKTSLSQTPHSGKQVPIAFAFTGQGTFYIGIGAQLYRDSHEFRKHIDQLDSLVRRQNFASFLPVVSGNVQPEDVSIVTMNLAIVCVEIALARLWESFGIKPSMVIGHSLGEYAALAVAGVLSDSAAIFLVGTRARLLTSKCTSRTHGMLSVRASAADIKHAGGDIPFEVSCINGPNETVLGGTLSNMEALSATLAAAGYRTFKLDLPHAYHTYQMDTIVDELVKQTETVVCKKTTIPIISPRFSRVMTSEDSIDVSYLIGATRETVDFAGALDDAWQSGLVNESTIWLEMGHHPTCSGFISRTLSSTRMALPSLQRDTDNWLTLAKTLCSLYSAGIPIDWNEYHRPFEQALRLIDAPTYAWTNKNYWIQYRGDWNLTKGRAMPKLDPTTTVVPVSKRFQTSSIHRLISEQYTDGKAILSAESSITDPSLQGVVDGHAMNGYGVASSFLHAEMAFTLAKRVSDKSFASAVSFGINVADFEYHEPVVKLINTSEPQPILVSAEADLEKMEVHVKWFNPAKEIWYCHATVFYEDPSSWLSTWSRSTKLITSRIDALNDMAVTGKASKLTTDLAYSLFGKLVGYSKLYQTMQSVILNEDEAMAEVQFPEDTGGSWTVPPHFIDGLISLSGFILNGGTHFDNTNNFFITPSWKSMRFARPLTPGGRYTAYVRMVPSDNHSFVGDVYVLQGSEIVGVVEAILFLQWPRVMLNRFFRPADVTAKPAAKVPGKSEPSTRPHFKPHHVSRHKPTLTPRSPDEGSENSDSSGVIISRPGGYSSSDQDMEELPSPPAGMNDDMEKALALVAEELAVDIGLLTDDALIADLGLDSLMSLVMSQRLREELGLEIRDAFFLEITTIQDLKALLR</sequence>
<proteinExistence type="evidence at transcript level"/>
<keyword id="KW-0012">Acyltransferase</keyword>
<keyword id="KW-0596">Phosphopantetheine</keyword>
<keyword id="KW-0597">Phosphoprotein</keyword>
<keyword id="KW-0808">Transferase</keyword>
<evidence type="ECO:0000250" key="1">
    <source>
        <dbReference type="UniProtKB" id="Q5B0D0"/>
    </source>
</evidence>
<evidence type="ECO:0000255" key="2"/>
<evidence type="ECO:0000255" key="3">
    <source>
        <dbReference type="PROSITE-ProRule" id="PRU00258"/>
    </source>
</evidence>
<evidence type="ECO:0000255" key="4">
    <source>
        <dbReference type="PROSITE-ProRule" id="PRU01348"/>
    </source>
</evidence>
<evidence type="ECO:0000255" key="5">
    <source>
        <dbReference type="PROSITE-ProRule" id="PRU01363"/>
    </source>
</evidence>
<evidence type="ECO:0000256" key="6">
    <source>
        <dbReference type="SAM" id="MobiDB-lite"/>
    </source>
</evidence>
<evidence type="ECO:0000269" key="7">
    <source>
    </source>
</evidence>
<evidence type="ECO:0000303" key="8">
    <source>
    </source>
</evidence>
<evidence type="ECO:0000305" key="9"/>
<evidence type="ECO:0000305" key="10">
    <source>
    </source>
</evidence>